<name>FUTSC_DROME</name>
<comment type="function">
    <text evidence="4 5 6 11 12">During embryogenesis, necessary for dendritic and axonal organization and growth at the neuromuscular junction through the regulation of the synaptic microtubule cytoskeleton (PubMed:10839355, PubMed:10839356, PubMed:11733059). Microtubule hairpin loops are found within a small subset of synaptic boutons at the neuromuscular synapse, these loops are stabilized by futsch (PubMed:10839355, PubMed:10839356, PubMed:11733059). Loop morphology and dynamics suggest that rearrangement of these microtubule-based loops is a critical component of the process of bouton division and for subsequent nerve-terminal growth and branching (PubMed:10839355, PubMed:10839356, PubMed:11733059). Translation is repressed by Fmr1 (PubMed:10839355, PubMed:10839356, PubMed:11733059). Together with ringer, required for neuromuscular junction (NMJ) bouton growth by regulating synaptic microtubules (PubMed:31156389). Function with ringer in maintaining microtubule stability and dynamics, is essential for promoting axon regeneration in response to peripheral (PNS) and central nervous system (CNS) injury (PubMed:31919191). In response to axotomy, acts downstream of a stress response cascade involving Xbp1 splicing, to control axon regeneration (PubMed:31919191).</text>
</comment>
<comment type="subunit">
    <text evidence="6 9 11">Heterodimer of a heavy and a light chain (PubMed:18419581). Interacts with Fmr1 (PubMed:11733059). Found in a complex with tubulin and Futsch (PubMed:31156389).</text>
</comment>
<comment type="subcellular location">
    <subcellularLocation>
        <location evidence="4">Cytoplasm</location>
    </subcellularLocation>
    <subcellularLocation>
        <location evidence="4 5">Cytoplasm</location>
        <location evidence="4 5">Cytoskeleton</location>
    </subcellularLocation>
    <text evidence="4">Microtubule-associated.</text>
</comment>
<comment type="tissue specificity">
    <text evidence="4 5">Neuronal cells within the PNS and CNS.</text>
</comment>
<comment type="developmental stage">
    <text evidence="4 12">All stages (PubMed:10839355). Detected in the cell body, and the proximal and medial axons of class IV dendritic arborization (da) neurons (at protein level) (PubMed:31919191).</text>
</comment>
<comment type="PTM">
    <text evidence="9">Several minor light chains can be created with markedly different pIs.</text>
</comment>
<comment type="PTM">
    <text evidence="7 8 10">Phosphorylated by SGG/GSK3. Phosphorylated by LRRK2 at the presynapse of neuromuscular junctions, which negatively regulates the activity controlling synaptic differentiation.</text>
</comment>
<comment type="disruption phenotype">
    <text evidence="11">Flies lacking both Ringer and Futsch display a significant reduction in microtubule loops at the neuromuscular junctions (NMJ) and reduced acetylated-tubulin levels.</text>
</comment>
<comment type="miscellaneous">
    <text evidence="13">'Futsch' means 'gone' in German.</text>
</comment>
<comment type="sequence caution" evidence="14">
    <conflict type="erroneous gene model prediction">
        <sequence resource="EMBL-CDS" id="CAA20006"/>
    </conflict>
</comment>
<proteinExistence type="evidence at protein level"/>
<keyword id="KW-0963">Cytoplasm</keyword>
<keyword id="KW-0206">Cytoskeleton</keyword>
<keyword id="KW-0217">Developmental protein</keyword>
<keyword id="KW-0493">Microtubule</keyword>
<keyword id="KW-0597">Phosphoprotein</keyword>
<keyword id="KW-1185">Reference proteome</keyword>
<keyword id="KW-0677">Repeat</keyword>
<protein>
    <recommendedName>
        <fullName>Microtubule-associated protein futsch</fullName>
    </recommendedName>
    <alternativeName>
        <fullName>MAP1B homolog</fullName>
    </alternativeName>
    <component>
        <recommendedName>
            <fullName>Futsch heavy chain</fullName>
        </recommendedName>
    </component>
    <component>
        <recommendedName>
            <fullName>Futsch light chain LC(f)</fullName>
        </recommendedName>
    </component>
</protein>
<dbReference type="EMBL" id="AE014298">
    <property type="protein sequence ID" value="ABW09325.1"/>
    <property type="molecule type" value="Genomic_DNA"/>
</dbReference>
<dbReference type="EMBL" id="AL031128">
    <property type="protein sequence ID" value="CAA20006.1"/>
    <property type="status" value="ALT_SEQ"/>
    <property type="molecule type" value="Genomic_DNA"/>
</dbReference>
<dbReference type="EMBL" id="EU523737">
    <property type="protein sequence ID" value="ACD38216.1"/>
    <property type="molecule type" value="mRNA"/>
</dbReference>
<dbReference type="PIR" id="T13564">
    <property type="entry name" value="T13564"/>
</dbReference>
<dbReference type="RefSeq" id="NP_001096864.1">
    <property type="nucleotide sequence ID" value="NM_001103394.3"/>
</dbReference>
<dbReference type="RefSeq" id="NP_001162632.2">
    <property type="nucleotide sequence ID" value="NM_001169161.3"/>
</dbReference>
<dbReference type="RefSeq" id="NP_001245461.1">
    <property type="nucleotide sequence ID" value="NM_001258532.1"/>
</dbReference>
<dbReference type="BioGRID" id="625175">
    <property type="interactions" value="24"/>
</dbReference>
<dbReference type="FunCoup" id="Q9W596">
    <property type="interactions" value="7"/>
</dbReference>
<dbReference type="IntAct" id="Q9W596">
    <property type="interactions" value="10"/>
</dbReference>
<dbReference type="STRING" id="7227.FBpp0300235"/>
<dbReference type="GlyGen" id="Q9W596">
    <property type="glycosylation" value="5 sites, 1 O-linked glycan (1 site)"/>
</dbReference>
<dbReference type="iPTMnet" id="Q9W596"/>
<dbReference type="PaxDb" id="7227-FBpp0300236"/>
<dbReference type="EnsemblMetazoa" id="FBtr0112628">
    <property type="protein sequence ID" value="FBpp0111540"/>
    <property type="gene ID" value="FBgn0259108"/>
</dbReference>
<dbReference type="EnsemblMetazoa" id="FBtr0307597">
    <property type="protein sequence ID" value="FBpp0300235"/>
    <property type="gene ID" value="FBgn0259108"/>
</dbReference>
<dbReference type="EnsemblMetazoa" id="FBtr0307598">
    <property type="protein sequence ID" value="FBpp0300236"/>
    <property type="gene ID" value="FBgn0259108"/>
</dbReference>
<dbReference type="GeneID" id="5740544"/>
<dbReference type="KEGG" id="dme:Dmel_CG34387"/>
<dbReference type="UCSC" id="CG34387-RC">
    <property type="organism name" value="d. melanogaster"/>
</dbReference>
<dbReference type="AGR" id="FB:FBgn0259108"/>
<dbReference type="CTD" id="5740544"/>
<dbReference type="FlyBase" id="FBgn0259108">
    <property type="gene designation" value="futsch"/>
</dbReference>
<dbReference type="VEuPathDB" id="VectorBase:FBgn0259108"/>
<dbReference type="eggNOG" id="KOG3592">
    <property type="taxonomic scope" value="Eukaryota"/>
</dbReference>
<dbReference type="HOGENOM" id="CLU_223193_0_0_1"/>
<dbReference type="InParanoid" id="Q9W596"/>
<dbReference type="OMA" id="RCAPLQC"/>
<dbReference type="OrthoDB" id="5371837at2759"/>
<dbReference type="PhylomeDB" id="Q9W596"/>
<dbReference type="SignaLink" id="Q9W596"/>
<dbReference type="BioGRID-ORCS" id="5740544">
    <property type="hits" value="0 hits in 1 CRISPR screen"/>
</dbReference>
<dbReference type="ChiTaRS" id="futsch">
    <property type="organism name" value="fly"/>
</dbReference>
<dbReference type="GenomeRNAi" id="5740544"/>
<dbReference type="PRO" id="PR:Q9W596"/>
<dbReference type="Proteomes" id="UP000000803">
    <property type="component" value="Chromosome X"/>
</dbReference>
<dbReference type="Bgee" id="FBgn0259108">
    <property type="expression patterns" value="Expressed in lamina monopolar neuron L3 (Drosophila) in brain and 209 other cell types or tissues"/>
</dbReference>
<dbReference type="ExpressionAtlas" id="Q9W596">
    <property type="expression patterns" value="baseline and differential"/>
</dbReference>
<dbReference type="GO" id="GO:0030424">
    <property type="term" value="C:axon"/>
    <property type="evidence" value="ECO:0000314"/>
    <property type="project" value="FlyBase"/>
</dbReference>
<dbReference type="GO" id="GO:0005829">
    <property type="term" value="C:cytosol"/>
    <property type="evidence" value="ECO:0000318"/>
    <property type="project" value="GO_Central"/>
</dbReference>
<dbReference type="GO" id="GO:0030425">
    <property type="term" value="C:dendrite"/>
    <property type="evidence" value="ECO:0000314"/>
    <property type="project" value="FlyBase"/>
</dbReference>
<dbReference type="GO" id="GO:0005874">
    <property type="term" value="C:microtubule"/>
    <property type="evidence" value="ECO:0000318"/>
    <property type="project" value="GO_Central"/>
</dbReference>
<dbReference type="GO" id="GO:0005875">
    <property type="term" value="C:microtubule associated complex"/>
    <property type="evidence" value="ECO:0000314"/>
    <property type="project" value="UniProtKB"/>
</dbReference>
<dbReference type="GO" id="GO:0015630">
    <property type="term" value="C:microtubule cytoskeleton"/>
    <property type="evidence" value="ECO:0000314"/>
    <property type="project" value="FlyBase"/>
</dbReference>
<dbReference type="GO" id="GO:0031594">
    <property type="term" value="C:neuromuscular junction"/>
    <property type="evidence" value="ECO:0000315"/>
    <property type="project" value="UniProtKB"/>
</dbReference>
<dbReference type="GO" id="GO:0043025">
    <property type="term" value="C:neuronal cell body"/>
    <property type="evidence" value="ECO:0000314"/>
    <property type="project" value="FlyBase"/>
</dbReference>
<dbReference type="GO" id="GO:0045202">
    <property type="term" value="C:synapse"/>
    <property type="evidence" value="ECO:0000318"/>
    <property type="project" value="GO_Central"/>
</dbReference>
<dbReference type="GO" id="GO:0003779">
    <property type="term" value="F:actin binding"/>
    <property type="evidence" value="ECO:0000318"/>
    <property type="project" value="GO_Central"/>
</dbReference>
<dbReference type="GO" id="GO:0019900">
    <property type="term" value="F:kinase binding"/>
    <property type="evidence" value="ECO:0000353"/>
    <property type="project" value="BHF-UCL"/>
</dbReference>
<dbReference type="GO" id="GO:0008017">
    <property type="term" value="F:microtubule binding"/>
    <property type="evidence" value="ECO:0000314"/>
    <property type="project" value="UniProtKB"/>
</dbReference>
<dbReference type="GO" id="GO:0008088">
    <property type="term" value="P:axo-dendritic transport"/>
    <property type="evidence" value="ECO:0000315"/>
    <property type="project" value="FlyBase"/>
</dbReference>
<dbReference type="GO" id="GO:0007409">
    <property type="term" value="P:axonogenesis"/>
    <property type="evidence" value="ECO:0000315"/>
    <property type="project" value="FlyBase"/>
</dbReference>
<dbReference type="GO" id="GO:0016358">
    <property type="term" value="P:dendrite development"/>
    <property type="evidence" value="ECO:0000318"/>
    <property type="project" value="GO_Central"/>
</dbReference>
<dbReference type="GO" id="GO:0048813">
    <property type="term" value="P:dendrite morphogenesis"/>
    <property type="evidence" value="ECO:0000315"/>
    <property type="project" value="FlyBase"/>
</dbReference>
<dbReference type="GO" id="GO:0000226">
    <property type="term" value="P:microtubule cytoskeleton organization"/>
    <property type="evidence" value="ECO:0000315"/>
    <property type="project" value="UniProtKB"/>
</dbReference>
<dbReference type="GO" id="GO:0043524">
    <property type="term" value="P:negative regulation of neuron apoptotic process"/>
    <property type="evidence" value="ECO:0000315"/>
    <property type="project" value="FlyBase"/>
</dbReference>
<dbReference type="GO" id="GO:0060052">
    <property type="term" value="P:neurofilament cytoskeleton organization"/>
    <property type="evidence" value="ECO:0000315"/>
    <property type="project" value="FlyBase"/>
</dbReference>
<dbReference type="GO" id="GO:0008355">
    <property type="term" value="P:olfactory learning"/>
    <property type="evidence" value="ECO:0000315"/>
    <property type="project" value="FlyBase"/>
</dbReference>
<dbReference type="GO" id="GO:0048680">
    <property type="term" value="P:positive regulation of axon regeneration"/>
    <property type="evidence" value="ECO:0000315"/>
    <property type="project" value="UniProtKB"/>
</dbReference>
<dbReference type="GO" id="GO:0031114">
    <property type="term" value="P:regulation of microtubule depolymerization"/>
    <property type="evidence" value="ECO:0000318"/>
    <property type="project" value="GO_Central"/>
</dbReference>
<dbReference type="GO" id="GO:0008582">
    <property type="term" value="P:regulation of synaptic assembly at neuromuscular junction"/>
    <property type="evidence" value="ECO:0000315"/>
    <property type="project" value="UniProtKB"/>
</dbReference>
<dbReference type="InterPro" id="IPR026074">
    <property type="entry name" value="MAP1"/>
</dbReference>
<dbReference type="InterPro" id="IPR056617">
    <property type="entry name" value="MAP1B/S_N"/>
</dbReference>
<dbReference type="InterPro" id="IPR009603">
    <property type="entry name" value="MAP_Futsch"/>
</dbReference>
<dbReference type="PANTHER" id="PTHR13843:SF12">
    <property type="entry name" value="ATPASE F1_V1_A1 COMPLEX ALPHA_BETA SUBUNIT NUCLEOTIDE-BINDING DOMAIN-CONTAINING PROTEIN"/>
    <property type="match status" value="1"/>
</dbReference>
<dbReference type="PANTHER" id="PTHR13843">
    <property type="entry name" value="MICROTUBULE-ASSOCIATED PROTEIN"/>
    <property type="match status" value="1"/>
</dbReference>
<dbReference type="Pfam" id="PF06740">
    <property type="entry name" value="MAP_Futsch"/>
    <property type="match status" value="51"/>
</dbReference>
<dbReference type="Pfam" id="PF23415">
    <property type="entry name" value="MAPB1_N"/>
    <property type="match status" value="1"/>
</dbReference>
<dbReference type="Pfam" id="PF25281">
    <property type="entry name" value="MBL_MAP1B"/>
    <property type="match status" value="1"/>
</dbReference>
<feature type="chain" id="PRO_0000087388" description="Microtubule-associated protein futsch">
    <location>
        <begin position="1"/>
        <end position="5495"/>
    </location>
</feature>
<feature type="chain" id="PRO_0000418374" description="Futsch heavy chain">
    <location>
        <begin position="1"/>
        <end position="5328"/>
    </location>
</feature>
<feature type="chain" id="PRO_0000418375" description="Futsch light chain LC(f)">
    <location>
        <begin position="5329"/>
        <end position="5495"/>
    </location>
</feature>
<feature type="repeat" description="1">
    <location>
        <begin position="1469"/>
        <end position="1502"/>
    </location>
</feature>
<feature type="repeat" description="2">
    <location>
        <begin position="1513"/>
        <end position="1539"/>
    </location>
</feature>
<feature type="repeat" description="3">
    <location>
        <begin position="1622"/>
        <end position="1649"/>
    </location>
</feature>
<feature type="repeat" description="4">
    <location>
        <begin position="1660"/>
        <end position="1686"/>
    </location>
</feature>
<feature type="repeat" description="5">
    <location>
        <begin position="1690"/>
        <end position="1718"/>
    </location>
</feature>
<feature type="repeat" description="6">
    <location>
        <begin position="1755"/>
        <end position="1782"/>
    </location>
</feature>
<feature type="repeat" description="7">
    <location>
        <begin position="1790"/>
        <end position="1818"/>
    </location>
</feature>
<feature type="repeat" description="8">
    <location>
        <begin position="1837"/>
        <end position="1865"/>
    </location>
</feature>
<feature type="repeat" description="9">
    <location>
        <begin position="1874"/>
        <end position="1902"/>
    </location>
</feature>
<feature type="repeat" description="10">
    <location>
        <begin position="1911"/>
        <end position="1939"/>
    </location>
</feature>
<feature type="repeat" description="11">
    <location>
        <begin position="1948"/>
        <end position="1976"/>
    </location>
</feature>
<feature type="repeat" description="12">
    <location>
        <begin position="1985"/>
        <end position="2013"/>
    </location>
</feature>
<feature type="repeat" description="13">
    <location>
        <begin position="2022"/>
        <end position="2050"/>
    </location>
</feature>
<feature type="repeat" description="14">
    <location>
        <begin position="2059"/>
        <end position="2087"/>
    </location>
</feature>
<feature type="repeat" description="15">
    <location>
        <begin position="2096"/>
        <end position="2124"/>
    </location>
</feature>
<feature type="repeat" description="16">
    <location>
        <begin position="2133"/>
        <end position="2161"/>
    </location>
</feature>
<feature type="repeat" description="17">
    <location>
        <begin position="2170"/>
        <end position="2198"/>
    </location>
</feature>
<feature type="repeat" description="18">
    <location>
        <begin position="2215"/>
        <end position="2243"/>
    </location>
</feature>
<feature type="repeat" description="19">
    <location>
        <begin position="2262"/>
        <end position="2292"/>
    </location>
</feature>
<feature type="repeat" description="20">
    <location>
        <begin position="2355"/>
        <end position="2391"/>
    </location>
</feature>
<feature type="repeat" description="21">
    <location>
        <begin position="2703"/>
        <end position="2726"/>
    </location>
</feature>
<feature type="repeat" description="22">
    <location>
        <begin position="2761"/>
        <end position="2787"/>
    </location>
</feature>
<feature type="repeat" description="23">
    <location>
        <begin position="2820"/>
        <end position="2846"/>
    </location>
</feature>
<feature type="repeat" description="24">
    <location>
        <begin position="2864"/>
        <end position="2892"/>
    </location>
</feature>
<feature type="repeat" description="25">
    <location>
        <begin position="2907"/>
        <end position="2933"/>
    </location>
</feature>
<feature type="repeat" description="26">
    <location>
        <begin position="2956"/>
        <end position="2987"/>
    </location>
</feature>
<feature type="repeat" description="27">
    <location>
        <begin position="3006"/>
        <end position="3034"/>
    </location>
</feature>
<feature type="repeat" description="28">
    <location>
        <begin position="3049"/>
        <end position="3075"/>
    </location>
</feature>
<feature type="repeat" description="29">
    <location>
        <begin position="3089"/>
        <end position="3117"/>
    </location>
</feature>
<feature type="repeat" description="30">
    <location>
        <begin position="3131"/>
        <end position="3158"/>
    </location>
</feature>
<feature type="repeat" description="31">
    <location>
        <begin position="3200"/>
        <end position="3224"/>
    </location>
</feature>
<feature type="repeat" description="32">
    <location>
        <begin position="3228"/>
        <end position="3256"/>
    </location>
</feature>
<feature type="repeat" description="33">
    <location>
        <begin position="3265"/>
        <end position="3293"/>
    </location>
</feature>
<feature type="repeat" description="34">
    <location>
        <begin position="3302"/>
        <end position="3330"/>
    </location>
</feature>
<feature type="repeat" description="35">
    <location>
        <begin position="3339"/>
        <end position="3367"/>
    </location>
</feature>
<feature type="repeat" description="36">
    <location>
        <begin position="3376"/>
        <end position="3404"/>
    </location>
</feature>
<feature type="repeat" description="37">
    <location>
        <begin position="3413"/>
        <end position="3441"/>
    </location>
</feature>
<feature type="repeat" description="38">
    <location>
        <begin position="3450"/>
        <end position="3478"/>
    </location>
</feature>
<feature type="repeat" description="39">
    <location>
        <begin position="3487"/>
        <end position="3515"/>
    </location>
</feature>
<feature type="repeat" description="40">
    <location>
        <begin position="3524"/>
        <end position="3552"/>
    </location>
</feature>
<feature type="repeat" description="41">
    <location>
        <begin position="3561"/>
        <end position="3589"/>
    </location>
</feature>
<feature type="repeat" description="42">
    <location>
        <begin position="3598"/>
        <end position="3626"/>
    </location>
</feature>
<feature type="repeat" description="43">
    <location>
        <begin position="3635"/>
        <end position="3663"/>
    </location>
</feature>
<feature type="repeat" description="44">
    <location>
        <begin position="3672"/>
        <end position="3700"/>
    </location>
</feature>
<feature type="repeat" description="45">
    <location>
        <begin position="3709"/>
        <end position="3737"/>
    </location>
</feature>
<feature type="repeat" description="46">
    <location>
        <begin position="3746"/>
        <end position="3774"/>
    </location>
</feature>
<feature type="repeat" description="47">
    <location>
        <begin position="3783"/>
        <end position="3811"/>
    </location>
</feature>
<feature type="repeat" description="48">
    <location>
        <begin position="3820"/>
        <end position="3848"/>
    </location>
</feature>
<feature type="repeat" description="49">
    <location>
        <begin position="3867"/>
        <end position="3894"/>
    </location>
</feature>
<feature type="repeat" description="50">
    <location>
        <begin position="3895"/>
        <end position="3921"/>
    </location>
</feature>
<feature type="repeat" description="51">
    <location>
        <begin position="3931"/>
        <end position="3958"/>
    </location>
</feature>
<feature type="repeat" description="52">
    <location>
        <begin position="3968"/>
        <end position="3995"/>
    </location>
</feature>
<feature type="repeat" description="53">
    <location>
        <begin position="4005"/>
        <end position="4032"/>
    </location>
</feature>
<feature type="region of interest" description="Disordered" evidence="1">
    <location>
        <begin position="1"/>
        <end position="97"/>
    </location>
</feature>
<feature type="region of interest" description="Disordered" evidence="1">
    <location>
        <begin position="656"/>
        <end position="975"/>
    </location>
</feature>
<feature type="region of interest" description="Disordered" evidence="1">
    <location>
        <begin position="988"/>
        <end position="1074"/>
    </location>
</feature>
<feature type="region of interest" description="Disordered" evidence="1">
    <location>
        <begin position="1086"/>
        <end position="1111"/>
    </location>
</feature>
<feature type="region of interest" description="Disordered" evidence="1">
    <location>
        <begin position="1128"/>
        <end position="1167"/>
    </location>
</feature>
<feature type="region of interest" description="Disordered" evidence="1">
    <location>
        <begin position="1185"/>
        <end position="1204"/>
    </location>
</feature>
<feature type="region of interest" description="Disordered" evidence="1">
    <location>
        <begin position="1255"/>
        <end position="1275"/>
    </location>
</feature>
<feature type="region of interest" description="Disordered" evidence="1">
    <location>
        <begin position="1306"/>
        <end position="1358"/>
    </location>
</feature>
<feature type="region of interest" description="Disordered" evidence="1">
    <location>
        <begin position="1402"/>
        <end position="1840"/>
    </location>
</feature>
<feature type="region of interest" description="53 X approximate repeat">
    <location>
        <begin position="1469"/>
        <end position="4032"/>
    </location>
</feature>
<feature type="region of interest" description="Disordered" evidence="1">
    <location>
        <begin position="1866"/>
        <end position="2631"/>
    </location>
</feature>
<feature type="region of interest" description="Disordered" evidence="1">
    <location>
        <begin position="2709"/>
        <end position="2810"/>
    </location>
</feature>
<feature type="region of interest" description="Disordered" evidence="1">
    <location>
        <begin position="2830"/>
        <end position="4166"/>
    </location>
</feature>
<feature type="region of interest" description="Disordered" evidence="1">
    <location>
        <begin position="4196"/>
        <end position="4230"/>
    </location>
</feature>
<feature type="region of interest" description="Disordered" evidence="1">
    <location>
        <begin position="4362"/>
        <end position="4612"/>
    </location>
</feature>
<feature type="region of interest" description="Disordered" evidence="1">
    <location>
        <begin position="4636"/>
        <end position="4668"/>
    </location>
</feature>
<feature type="region of interest" description="Disordered" evidence="1">
    <location>
        <begin position="4687"/>
        <end position="4975"/>
    </location>
</feature>
<feature type="region of interest" description="Disordered" evidence="1">
    <location>
        <begin position="5035"/>
        <end position="5065"/>
    </location>
</feature>
<feature type="region of interest" description="Disordered" evidence="1">
    <location>
        <begin position="5101"/>
        <end position="5138"/>
    </location>
</feature>
<feature type="region of interest" description="Disordered" evidence="1">
    <location>
        <begin position="5170"/>
        <end position="5199"/>
    </location>
</feature>
<feature type="region of interest" description="Disordered" evidence="1">
    <location>
        <begin position="5328"/>
        <end position="5350"/>
    </location>
</feature>
<feature type="compositionally biased region" description="Low complexity" evidence="1">
    <location>
        <begin position="35"/>
        <end position="48"/>
    </location>
</feature>
<feature type="compositionally biased region" description="Basic and acidic residues" evidence="1">
    <location>
        <begin position="656"/>
        <end position="672"/>
    </location>
</feature>
<feature type="compositionally biased region" description="Basic and acidic residues" evidence="1">
    <location>
        <begin position="696"/>
        <end position="716"/>
    </location>
</feature>
<feature type="compositionally biased region" description="Basic and acidic residues" evidence="1">
    <location>
        <begin position="758"/>
        <end position="795"/>
    </location>
</feature>
<feature type="compositionally biased region" description="Low complexity" evidence="1">
    <location>
        <begin position="797"/>
        <end position="806"/>
    </location>
</feature>
<feature type="compositionally biased region" description="Low complexity" evidence="1">
    <location>
        <begin position="819"/>
        <end position="831"/>
    </location>
</feature>
<feature type="compositionally biased region" description="Basic and acidic residues" evidence="1">
    <location>
        <begin position="832"/>
        <end position="843"/>
    </location>
</feature>
<feature type="compositionally biased region" description="Low complexity" evidence="1">
    <location>
        <begin position="850"/>
        <end position="888"/>
    </location>
</feature>
<feature type="compositionally biased region" description="Basic and acidic residues" evidence="1">
    <location>
        <begin position="918"/>
        <end position="931"/>
    </location>
</feature>
<feature type="compositionally biased region" description="Polar residues" evidence="1">
    <location>
        <begin position="932"/>
        <end position="942"/>
    </location>
</feature>
<feature type="compositionally biased region" description="Basic and acidic residues" evidence="1">
    <location>
        <begin position="962"/>
        <end position="975"/>
    </location>
</feature>
<feature type="compositionally biased region" description="Basic and acidic residues" evidence="1">
    <location>
        <begin position="988"/>
        <end position="1007"/>
    </location>
</feature>
<feature type="compositionally biased region" description="Acidic residues" evidence="1">
    <location>
        <begin position="1012"/>
        <end position="1041"/>
    </location>
</feature>
<feature type="compositionally biased region" description="Basic and acidic residues" evidence="1">
    <location>
        <begin position="1047"/>
        <end position="1065"/>
    </location>
</feature>
<feature type="compositionally biased region" description="Basic and acidic residues" evidence="1">
    <location>
        <begin position="1128"/>
        <end position="1140"/>
    </location>
</feature>
<feature type="compositionally biased region" description="Basic and acidic residues" evidence="1">
    <location>
        <begin position="1148"/>
        <end position="1163"/>
    </location>
</feature>
<feature type="compositionally biased region" description="Polar residues" evidence="1">
    <location>
        <begin position="1187"/>
        <end position="1196"/>
    </location>
</feature>
<feature type="compositionally biased region" description="Basic and acidic residues" evidence="1">
    <location>
        <begin position="1306"/>
        <end position="1319"/>
    </location>
</feature>
<feature type="compositionally biased region" description="Basic and acidic residues" evidence="1">
    <location>
        <begin position="1327"/>
        <end position="1337"/>
    </location>
</feature>
<feature type="compositionally biased region" description="Basic and acidic residues" evidence="1">
    <location>
        <begin position="1343"/>
        <end position="1358"/>
    </location>
</feature>
<feature type="compositionally biased region" description="Basic and acidic residues" evidence="1">
    <location>
        <begin position="1408"/>
        <end position="1443"/>
    </location>
</feature>
<feature type="compositionally biased region" description="Basic and acidic residues" evidence="1">
    <location>
        <begin position="1546"/>
        <end position="1555"/>
    </location>
</feature>
<feature type="compositionally biased region" description="Basic and acidic residues" evidence="1">
    <location>
        <begin position="1571"/>
        <end position="1663"/>
    </location>
</feature>
<feature type="compositionally biased region" description="Basic and acidic residues" evidence="1">
    <location>
        <begin position="1679"/>
        <end position="1696"/>
    </location>
</feature>
<feature type="compositionally biased region" description="Basic and acidic residues" evidence="1">
    <location>
        <begin position="1718"/>
        <end position="1732"/>
    </location>
</feature>
<feature type="compositionally biased region" description="Basic and acidic residues" evidence="1">
    <location>
        <begin position="1748"/>
        <end position="1779"/>
    </location>
</feature>
<feature type="compositionally biased region" description="Polar residues" evidence="1">
    <location>
        <begin position="1804"/>
        <end position="1815"/>
    </location>
</feature>
<feature type="compositionally biased region" description="Basic and acidic residues" evidence="1">
    <location>
        <begin position="1887"/>
        <end position="1896"/>
    </location>
</feature>
<feature type="compositionally biased region" description="Basic and acidic residues" evidence="1">
    <location>
        <begin position="1904"/>
        <end position="1942"/>
    </location>
</feature>
<feature type="compositionally biased region" description="Basic and acidic residues" evidence="1">
    <location>
        <begin position="1960"/>
        <end position="1976"/>
    </location>
</feature>
<feature type="compositionally biased region" description="Basic and acidic residues" evidence="1">
    <location>
        <begin position="1994"/>
        <end position="2007"/>
    </location>
</feature>
<feature type="compositionally biased region" description="Basic and acidic residues" evidence="1">
    <location>
        <begin position="2041"/>
        <end position="2059"/>
    </location>
</feature>
<feature type="compositionally biased region" description="Basic and acidic residues" evidence="1">
    <location>
        <begin position="2078"/>
        <end position="2096"/>
    </location>
</feature>
<feature type="compositionally biased region" description="Basic and acidic residues" evidence="1">
    <location>
        <begin position="2115"/>
        <end position="2133"/>
    </location>
</feature>
<feature type="compositionally biased region" description="Basic and acidic residues" evidence="1">
    <location>
        <begin position="2152"/>
        <end position="2170"/>
    </location>
</feature>
<feature type="compositionally biased region" description="Basic and acidic residues" evidence="1">
    <location>
        <begin position="2189"/>
        <end position="2207"/>
    </location>
</feature>
<feature type="compositionally biased region" description="Basic and acidic residues" evidence="1">
    <location>
        <begin position="2226"/>
        <end position="2244"/>
    </location>
</feature>
<feature type="compositionally biased region" description="Basic and acidic residues" evidence="1">
    <location>
        <begin position="2263"/>
        <end position="2281"/>
    </location>
</feature>
<feature type="compositionally biased region" description="Basic and acidic residues" evidence="1">
    <location>
        <begin position="2300"/>
        <end position="2318"/>
    </location>
</feature>
<feature type="compositionally biased region" description="Basic and acidic residues" evidence="1">
    <location>
        <begin position="2337"/>
        <end position="2355"/>
    </location>
</feature>
<feature type="compositionally biased region" description="Basic and acidic residues" evidence="1">
    <location>
        <begin position="2374"/>
        <end position="2391"/>
    </location>
</feature>
<feature type="compositionally biased region" description="Basic and acidic residues" evidence="1">
    <location>
        <begin position="2419"/>
        <end position="2435"/>
    </location>
</feature>
<feature type="compositionally biased region" description="Basic and acidic residues" evidence="1">
    <location>
        <begin position="2466"/>
        <end position="2482"/>
    </location>
</feature>
<feature type="compositionally biased region" description="Basic and acidic residues" evidence="1">
    <location>
        <begin position="2560"/>
        <end position="2588"/>
    </location>
</feature>
<feature type="compositionally biased region" description="Basic and acidic residues" evidence="1">
    <location>
        <begin position="2604"/>
        <end position="2627"/>
    </location>
</feature>
<feature type="compositionally biased region" description="Basic and acidic residues" evidence="1">
    <location>
        <begin position="2764"/>
        <end position="2780"/>
    </location>
</feature>
<feature type="compositionally biased region" description="Low complexity" evidence="1">
    <location>
        <begin position="2845"/>
        <end position="2861"/>
    </location>
</feature>
<feature type="compositionally biased region" description="Basic and acidic residues" evidence="1">
    <location>
        <begin position="2889"/>
        <end position="2914"/>
    </location>
</feature>
<feature type="compositionally biased region" description="Basic and acidic residues" evidence="1">
    <location>
        <begin position="2942"/>
        <end position="2954"/>
    </location>
</feature>
<feature type="compositionally biased region" description="Polar residues" evidence="1">
    <location>
        <begin position="2955"/>
        <end position="2966"/>
    </location>
</feature>
<feature type="compositionally biased region" description="Basic and acidic residues" evidence="1">
    <location>
        <begin position="2980"/>
        <end position="2996"/>
    </location>
</feature>
<feature type="compositionally biased region" description="Basic and acidic residues" evidence="1">
    <location>
        <begin position="3017"/>
        <end position="3051"/>
    </location>
</feature>
<feature type="compositionally biased region" description="Basic and acidic residues" evidence="1">
    <location>
        <begin position="3061"/>
        <end position="3075"/>
    </location>
</feature>
<feature type="compositionally biased region" description="Basic and acidic residues" evidence="1">
    <location>
        <begin position="3087"/>
        <end position="3116"/>
    </location>
</feature>
<feature type="compositionally biased region" description="Basic and acidic residues" evidence="1">
    <location>
        <begin position="3156"/>
        <end position="3168"/>
    </location>
</feature>
<feature type="compositionally biased region" description="Basic and acidic residues" evidence="1">
    <location>
        <begin position="3175"/>
        <end position="3208"/>
    </location>
</feature>
<feature type="compositionally biased region" description="Basic and acidic residues" evidence="1">
    <location>
        <begin position="3226"/>
        <end position="3248"/>
    </location>
</feature>
<feature type="compositionally biased region" description="Basic and acidic residues" evidence="1">
    <location>
        <begin position="3300"/>
        <end position="3310"/>
    </location>
</feature>
<feature type="compositionally biased region" description="Polar residues" evidence="1">
    <location>
        <begin position="3316"/>
        <end position="3327"/>
    </location>
</feature>
<feature type="compositionally biased region" description="Basic and acidic residues" evidence="1">
    <location>
        <begin position="3350"/>
        <end position="3363"/>
    </location>
</feature>
<feature type="compositionally biased region" description="Basic and acidic residues" evidence="1">
    <location>
        <begin position="3373"/>
        <end position="3399"/>
    </location>
</feature>
<feature type="compositionally biased region" description="Basic and acidic residues" evidence="1">
    <location>
        <begin position="3419"/>
        <end position="3431"/>
    </location>
</feature>
<feature type="compositionally biased region" description="Basic and acidic residues" evidence="1">
    <location>
        <begin position="3448"/>
        <end position="3465"/>
    </location>
</feature>
<feature type="compositionally biased region" description="Basic and acidic residues" evidence="1">
    <location>
        <begin position="3484"/>
        <end position="3502"/>
    </location>
</feature>
<feature type="compositionally biased region" description="Basic and acidic residues" evidence="1">
    <location>
        <begin position="3521"/>
        <end position="3539"/>
    </location>
</feature>
<feature type="compositionally biased region" description="Basic and acidic residues" evidence="1">
    <location>
        <begin position="3558"/>
        <end position="3576"/>
    </location>
</feature>
<feature type="compositionally biased region" description="Basic and acidic residues" evidence="1">
    <location>
        <begin position="3599"/>
        <end position="3613"/>
    </location>
</feature>
<feature type="compositionally biased region" description="Basic and acidic residues" evidence="1">
    <location>
        <begin position="3632"/>
        <end position="3650"/>
    </location>
</feature>
<feature type="compositionally biased region" description="Basic and acidic residues" evidence="1">
    <location>
        <begin position="3669"/>
        <end position="3687"/>
    </location>
</feature>
<feature type="compositionally biased region" description="Basic and acidic residues" evidence="1">
    <location>
        <begin position="3710"/>
        <end position="3724"/>
    </location>
</feature>
<feature type="compositionally biased region" description="Basic and acidic residues" evidence="1">
    <location>
        <begin position="3743"/>
        <end position="3761"/>
    </location>
</feature>
<feature type="compositionally biased region" description="Basic and acidic residues" evidence="1">
    <location>
        <begin position="3780"/>
        <end position="3798"/>
    </location>
</feature>
<feature type="compositionally biased region" description="Basic and acidic residues" evidence="1">
    <location>
        <begin position="3817"/>
        <end position="3835"/>
    </location>
</feature>
<feature type="compositionally biased region" description="Low complexity" evidence="1">
    <location>
        <begin position="3836"/>
        <end position="3850"/>
    </location>
</feature>
<feature type="compositionally biased region" description="Basic and acidic residues" evidence="1">
    <location>
        <begin position="3854"/>
        <end position="3872"/>
    </location>
</feature>
<feature type="compositionally biased region" description="Basic and acidic residues" evidence="1">
    <location>
        <begin position="3891"/>
        <end position="3909"/>
    </location>
</feature>
<feature type="compositionally biased region" description="Basic and acidic residues" evidence="1">
    <location>
        <begin position="3928"/>
        <end position="3946"/>
    </location>
</feature>
<feature type="compositionally biased region" description="Basic and acidic residues" evidence="1">
    <location>
        <begin position="3965"/>
        <end position="3983"/>
    </location>
</feature>
<feature type="compositionally biased region" description="Basic and acidic residues" evidence="1">
    <location>
        <begin position="4002"/>
        <end position="4020"/>
    </location>
</feature>
<feature type="compositionally biased region" description="Basic and acidic residues" evidence="1">
    <location>
        <begin position="4039"/>
        <end position="4066"/>
    </location>
</feature>
<feature type="compositionally biased region" description="Basic and acidic residues" evidence="1">
    <location>
        <begin position="4086"/>
        <end position="4095"/>
    </location>
</feature>
<feature type="compositionally biased region" description="Basic and acidic residues" evidence="1">
    <location>
        <begin position="4115"/>
        <end position="4141"/>
    </location>
</feature>
<feature type="compositionally biased region" description="Polar residues" evidence="1">
    <location>
        <begin position="4142"/>
        <end position="4152"/>
    </location>
</feature>
<feature type="compositionally biased region" description="Polar residues" evidence="1">
    <location>
        <begin position="4214"/>
        <end position="4223"/>
    </location>
</feature>
<feature type="compositionally biased region" description="Basic and acidic residues" evidence="1">
    <location>
        <begin position="4362"/>
        <end position="4379"/>
    </location>
</feature>
<feature type="compositionally biased region" description="Basic and acidic residues" evidence="1">
    <location>
        <begin position="4386"/>
        <end position="4410"/>
    </location>
</feature>
<feature type="compositionally biased region" description="Basic and acidic residues" evidence="1">
    <location>
        <begin position="4419"/>
        <end position="4432"/>
    </location>
</feature>
<feature type="compositionally biased region" description="Low complexity" evidence="1">
    <location>
        <begin position="4443"/>
        <end position="4461"/>
    </location>
</feature>
<feature type="compositionally biased region" description="Basic and acidic residues" evidence="1">
    <location>
        <begin position="4462"/>
        <end position="4481"/>
    </location>
</feature>
<feature type="compositionally biased region" description="Polar residues" evidence="1">
    <location>
        <begin position="4498"/>
        <end position="4508"/>
    </location>
</feature>
<feature type="compositionally biased region" description="Low complexity" evidence="1">
    <location>
        <begin position="4517"/>
        <end position="4528"/>
    </location>
</feature>
<feature type="compositionally biased region" description="Basic and acidic residues" evidence="1">
    <location>
        <begin position="4529"/>
        <end position="4539"/>
    </location>
</feature>
<feature type="compositionally biased region" description="Low complexity" evidence="1">
    <location>
        <begin position="4540"/>
        <end position="4560"/>
    </location>
</feature>
<feature type="compositionally biased region" description="Basic and acidic residues" evidence="1">
    <location>
        <begin position="4575"/>
        <end position="4584"/>
    </location>
</feature>
<feature type="compositionally biased region" description="Basic and acidic residues" evidence="1">
    <location>
        <begin position="4639"/>
        <end position="4650"/>
    </location>
</feature>
<feature type="compositionally biased region" description="Low complexity" evidence="1">
    <location>
        <begin position="4651"/>
        <end position="4662"/>
    </location>
</feature>
<feature type="compositionally biased region" description="Low complexity" evidence="1">
    <location>
        <begin position="4703"/>
        <end position="4714"/>
    </location>
</feature>
<feature type="compositionally biased region" description="Acidic residues" evidence="1">
    <location>
        <begin position="4744"/>
        <end position="4754"/>
    </location>
</feature>
<feature type="compositionally biased region" description="Basic and acidic residues" evidence="1">
    <location>
        <begin position="4755"/>
        <end position="4764"/>
    </location>
</feature>
<feature type="compositionally biased region" description="Basic and acidic residues" evidence="1">
    <location>
        <begin position="4788"/>
        <end position="4798"/>
    </location>
</feature>
<feature type="compositionally biased region" description="Low complexity" evidence="1">
    <location>
        <begin position="4804"/>
        <end position="4829"/>
    </location>
</feature>
<feature type="compositionally biased region" description="Polar residues" evidence="1">
    <location>
        <begin position="4835"/>
        <end position="4851"/>
    </location>
</feature>
<feature type="compositionally biased region" description="Low complexity" evidence="1">
    <location>
        <begin position="4875"/>
        <end position="4905"/>
    </location>
</feature>
<feature type="compositionally biased region" description="Polar residues" evidence="1">
    <location>
        <begin position="4915"/>
        <end position="4930"/>
    </location>
</feature>
<feature type="compositionally biased region" description="Basic and acidic residues" evidence="1">
    <location>
        <begin position="4955"/>
        <end position="4970"/>
    </location>
</feature>
<feature type="compositionally biased region" description="Polar residues" evidence="1">
    <location>
        <begin position="5101"/>
        <end position="5112"/>
    </location>
</feature>
<feature type="compositionally biased region" description="Low complexity" evidence="1">
    <location>
        <begin position="5185"/>
        <end position="5196"/>
    </location>
</feature>
<feature type="modified residue" description="Phosphoserine; by GSK3-beta" evidence="15">
    <location>
        <position position="2800"/>
    </location>
</feature>
<feature type="modified residue" description="Phosphoserine" evidence="8">
    <location>
        <position position="3067"/>
    </location>
</feature>
<feature type="modified residue" description="Phosphoserine" evidence="8">
    <location>
        <position position="3071"/>
    </location>
</feature>
<feature type="modified residue" description="Phosphoserine" evidence="8">
    <location>
        <position position="3075"/>
    </location>
</feature>
<feature type="modified residue" description="Phosphoserine; by GSK3-beta" evidence="15">
    <location>
        <position position="4950"/>
    </location>
</feature>
<feature type="sequence conflict" description="In Ref. 4; CAA20006." evidence="14" ref="4">
    <location>
        <begin position="647"/>
        <end position="648"/>
    </location>
</feature>
<feature type="sequence conflict" description="In Ref. 4; CAA20006." evidence="14" ref="4">
    <original>A</original>
    <variation>T</variation>
    <location>
        <position position="732"/>
    </location>
</feature>
<feature type="sequence conflict" description="In Ref. 4; CAA20006." evidence="14" ref="4">
    <original>T</original>
    <variation>A</variation>
    <location>
        <position position="799"/>
    </location>
</feature>
<feature type="sequence conflict" description="In Ref. 4; CAA20006." evidence="14" ref="4">
    <original>G</original>
    <variation>N</variation>
    <location>
        <position position="1322"/>
    </location>
</feature>
<feature type="sequence conflict" description="In Ref. 4; CAA20006." evidence="14" ref="4">
    <original>T</original>
    <variation>S</variation>
    <location>
        <position position="2312"/>
    </location>
</feature>
<feature type="sequence conflict" description="In Ref. 4; CAA20006." evidence="14" ref="4">
    <original>C</original>
    <variation>S</variation>
    <location>
        <position position="2887"/>
    </location>
</feature>
<feature type="sequence conflict" description="In Ref. 4; CAA20006." evidence="14" ref="4">
    <original>M</original>
    <variation>V</variation>
    <location>
        <position position="3080"/>
    </location>
</feature>
<feature type="sequence conflict" description="In Ref. 4; CAA20006." evidence="14" ref="4">
    <original>E</original>
    <variation>K</variation>
    <location>
        <position position="3557"/>
    </location>
</feature>
<feature type="sequence conflict" description="In Ref. 4; CAA20006." evidence="14" ref="4">
    <original>R</original>
    <variation>S</variation>
    <location>
        <position position="3571"/>
    </location>
</feature>
<feature type="sequence conflict" description="In Ref. 4; CAA20006." evidence="14" ref="4">
    <original>S</original>
    <variation>Y</variation>
    <location>
        <position position="3620"/>
    </location>
</feature>
<feature type="sequence conflict" description="In Ref. 4; CAA20006." evidence="14" ref="4">
    <original>K</original>
    <variation>E</variation>
    <location>
        <position position="3844"/>
    </location>
</feature>
<feature type="sequence conflict" description="In Ref. 4; CAA20006." evidence="14" ref="4">
    <original>E</original>
    <variation>V</variation>
    <location>
        <position position="3902"/>
    </location>
</feature>
<feature type="sequence conflict" description="In Ref. 4; CAA20006." evidence="14" ref="4">
    <original>T</original>
    <variation>A</variation>
    <location>
        <position position="4439"/>
    </location>
</feature>
<reference evidence="14" key="1">
    <citation type="journal article" date="2000" name="Neuron">
        <title>Drosophila Futsch/22C10 is a MAP1B-like protein required for dendritic and axonal development.</title>
        <authorList>
            <person name="Hummel T."/>
            <person name="Krukkert K."/>
            <person name="Roos J."/>
            <person name="Davis G."/>
            <person name="Klambt C."/>
        </authorList>
    </citation>
    <scope>NUCLEOTIDE SEQUENCE [GENOMIC DNA]</scope>
    <scope>FUNCTION</scope>
    <scope>SUBCELLULAR LOCATION</scope>
    <scope>TISSUE SPECIFICITY</scope>
    <scope>DEVELOPMENTAL STAGE</scope>
    <source>
        <strain evidence="4">Oregon-R</strain>
    </source>
</reference>
<reference key="2">
    <citation type="journal article" date="2000" name="Science">
        <title>The genome sequence of Drosophila melanogaster.</title>
        <authorList>
            <person name="Adams M.D."/>
            <person name="Celniker S.E."/>
            <person name="Holt R.A."/>
            <person name="Evans C.A."/>
            <person name="Gocayne J.D."/>
            <person name="Amanatides P.G."/>
            <person name="Scherer S.E."/>
            <person name="Li P.W."/>
            <person name="Hoskins R.A."/>
            <person name="Galle R.F."/>
            <person name="George R.A."/>
            <person name="Lewis S.E."/>
            <person name="Richards S."/>
            <person name="Ashburner M."/>
            <person name="Henderson S.N."/>
            <person name="Sutton G.G."/>
            <person name="Wortman J.R."/>
            <person name="Yandell M.D."/>
            <person name="Zhang Q."/>
            <person name="Chen L.X."/>
            <person name="Brandon R.C."/>
            <person name="Rogers Y.-H.C."/>
            <person name="Blazej R.G."/>
            <person name="Champe M."/>
            <person name="Pfeiffer B.D."/>
            <person name="Wan K.H."/>
            <person name="Doyle C."/>
            <person name="Baxter E.G."/>
            <person name="Helt G."/>
            <person name="Nelson C.R."/>
            <person name="Miklos G.L.G."/>
            <person name="Abril J.F."/>
            <person name="Agbayani A."/>
            <person name="An H.-J."/>
            <person name="Andrews-Pfannkoch C."/>
            <person name="Baldwin D."/>
            <person name="Ballew R.M."/>
            <person name="Basu A."/>
            <person name="Baxendale J."/>
            <person name="Bayraktaroglu L."/>
            <person name="Beasley E.M."/>
            <person name="Beeson K.Y."/>
            <person name="Benos P.V."/>
            <person name="Berman B.P."/>
            <person name="Bhandari D."/>
            <person name="Bolshakov S."/>
            <person name="Borkova D."/>
            <person name="Botchan M.R."/>
            <person name="Bouck J."/>
            <person name="Brokstein P."/>
            <person name="Brottier P."/>
            <person name="Burtis K.C."/>
            <person name="Busam D.A."/>
            <person name="Butler H."/>
            <person name="Cadieu E."/>
            <person name="Center A."/>
            <person name="Chandra I."/>
            <person name="Cherry J.M."/>
            <person name="Cawley S."/>
            <person name="Dahlke C."/>
            <person name="Davenport L.B."/>
            <person name="Davies P."/>
            <person name="de Pablos B."/>
            <person name="Delcher A."/>
            <person name="Deng Z."/>
            <person name="Mays A.D."/>
            <person name="Dew I."/>
            <person name="Dietz S.M."/>
            <person name="Dodson K."/>
            <person name="Doup L.E."/>
            <person name="Downes M."/>
            <person name="Dugan-Rocha S."/>
            <person name="Dunkov B.C."/>
            <person name="Dunn P."/>
            <person name="Durbin K.J."/>
            <person name="Evangelista C.C."/>
            <person name="Ferraz C."/>
            <person name="Ferriera S."/>
            <person name="Fleischmann W."/>
            <person name="Fosler C."/>
            <person name="Gabrielian A.E."/>
            <person name="Garg N.S."/>
            <person name="Gelbart W.M."/>
            <person name="Glasser K."/>
            <person name="Glodek A."/>
            <person name="Gong F."/>
            <person name="Gorrell J.H."/>
            <person name="Gu Z."/>
            <person name="Guan P."/>
            <person name="Harris M."/>
            <person name="Harris N.L."/>
            <person name="Harvey D.A."/>
            <person name="Heiman T.J."/>
            <person name="Hernandez J.R."/>
            <person name="Houck J."/>
            <person name="Hostin D."/>
            <person name="Houston K.A."/>
            <person name="Howland T.J."/>
            <person name="Wei M.-H."/>
            <person name="Ibegwam C."/>
            <person name="Jalali M."/>
            <person name="Kalush F."/>
            <person name="Karpen G.H."/>
            <person name="Ke Z."/>
            <person name="Kennison J.A."/>
            <person name="Ketchum K.A."/>
            <person name="Kimmel B.E."/>
            <person name="Kodira C.D."/>
            <person name="Kraft C.L."/>
            <person name="Kravitz S."/>
            <person name="Kulp D."/>
            <person name="Lai Z."/>
            <person name="Lasko P."/>
            <person name="Lei Y."/>
            <person name="Levitsky A.A."/>
            <person name="Li J.H."/>
            <person name="Li Z."/>
            <person name="Liang Y."/>
            <person name="Lin X."/>
            <person name="Liu X."/>
            <person name="Mattei B."/>
            <person name="McIntosh T.C."/>
            <person name="McLeod M.P."/>
            <person name="McPherson D."/>
            <person name="Merkulov G."/>
            <person name="Milshina N.V."/>
            <person name="Mobarry C."/>
            <person name="Morris J."/>
            <person name="Moshrefi A."/>
            <person name="Mount S.M."/>
            <person name="Moy M."/>
            <person name="Murphy B."/>
            <person name="Murphy L."/>
            <person name="Muzny D.M."/>
            <person name="Nelson D.L."/>
            <person name="Nelson D.R."/>
            <person name="Nelson K.A."/>
            <person name="Nixon K."/>
            <person name="Nusskern D.R."/>
            <person name="Pacleb J.M."/>
            <person name="Palazzolo M."/>
            <person name="Pittman G.S."/>
            <person name="Pan S."/>
            <person name="Pollard J."/>
            <person name="Puri V."/>
            <person name="Reese M.G."/>
            <person name="Reinert K."/>
            <person name="Remington K."/>
            <person name="Saunders R.D.C."/>
            <person name="Scheeler F."/>
            <person name="Shen H."/>
            <person name="Shue B.C."/>
            <person name="Siden-Kiamos I."/>
            <person name="Simpson M."/>
            <person name="Skupski M.P."/>
            <person name="Smith T.J."/>
            <person name="Spier E."/>
            <person name="Spradling A.C."/>
            <person name="Stapleton M."/>
            <person name="Strong R."/>
            <person name="Sun E."/>
            <person name="Svirskas R."/>
            <person name="Tector C."/>
            <person name="Turner R."/>
            <person name="Venter E."/>
            <person name="Wang A.H."/>
            <person name="Wang X."/>
            <person name="Wang Z.-Y."/>
            <person name="Wassarman D.A."/>
            <person name="Weinstock G.M."/>
            <person name="Weissenbach J."/>
            <person name="Williams S.M."/>
            <person name="Woodage T."/>
            <person name="Worley K.C."/>
            <person name="Wu D."/>
            <person name="Yang S."/>
            <person name="Yao Q.A."/>
            <person name="Ye J."/>
            <person name="Yeh R.-F."/>
            <person name="Zaveri J.S."/>
            <person name="Zhan M."/>
            <person name="Zhang G."/>
            <person name="Zhao Q."/>
            <person name="Zheng L."/>
            <person name="Zheng X.H."/>
            <person name="Zhong F.N."/>
            <person name="Zhong W."/>
            <person name="Zhou X."/>
            <person name="Zhu S.C."/>
            <person name="Zhu X."/>
            <person name="Smith H.O."/>
            <person name="Gibbs R.A."/>
            <person name="Myers E.W."/>
            <person name="Rubin G.M."/>
            <person name="Venter J.C."/>
        </authorList>
    </citation>
    <scope>NUCLEOTIDE SEQUENCE [LARGE SCALE GENOMIC DNA]</scope>
    <source>
        <strain evidence="2">Berkeley</strain>
    </source>
</reference>
<reference evidence="14" key="3">
    <citation type="journal article" date="2002" name="Genome Biol.">
        <title>Annotation of the Drosophila melanogaster euchromatic genome: a systematic review.</title>
        <authorList>
            <person name="Misra S."/>
            <person name="Crosby M.A."/>
            <person name="Mungall C.J."/>
            <person name="Matthews B.B."/>
            <person name="Campbell K.S."/>
            <person name="Hradecky P."/>
            <person name="Huang Y."/>
            <person name="Kaminker J.S."/>
            <person name="Millburn G.H."/>
            <person name="Prochnik S.E."/>
            <person name="Smith C.D."/>
            <person name="Tupy J.L."/>
            <person name="Whitfield E.J."/>
            <person name="Bayraktaroglu L."/>
            <person name="Berman B.P."/>
            <person name="Bettencourt B.R."/>
            <person name="Celniker S.E."/>
            <person name="de Grey A.D.N.J."/>
            <person name="Drysdale R.A."/>
            <person name="Harris N.L."/>
            <person name="Richter J."/>
            <person name="Russo S."/>
            <person name="Schroeder A.J."/>
            <person name="Shu S.Q."/>
            <person name="Stapleton M."/>
            <person name="Yamada C."/>
            <person name="Ashburner M."/>
            <person name="Gelbart W.M."/>
            <person name="Rubin G.M."/>
            <person name="Lewis S.E."/>
        </authorList>
    </citation>
    <scope>GENOME REANNOTATION</scope>
    <source>
        <strain>Berkeley</strain>
    </source>
</reference>
<reference evidence="16" key="4">
    <citation type="journal article" date="2000" name="Science">
        <title>From sequence to chromosome: the tip of the X chromosome of D. melanogaster.</title>
        <authorList>
            <person name="Benos P.V."/>
            <person name="Gatt M.K."/>
            <person name="Ashburner M."/>
            <person name="Murphy L."/>
            <person name="Harris D."/>
            <person name="Barrell B.G."/>
            <person name="Ferraz C."/>
            <person name="Vidal S."/>
            <person name="Brun C."/>
            <person name="Demailles J."/>
            <person name="Cadieu E."/>
            <person name="Dreano S."/>
            <person name="Gloux S."/>
            <person name="Lelaure V."/>
            <person name="Mottier S."/>
            <person name="Galibert F."/>
            <person name="Borkova D."/>
            <person name="Minana B."/>
            <person name="Kafatos F.C."/>
            <person name="Louis C."/>
            <person name="Siden-Kiamos I."/>
            <person name="Bolshakov S."/>
            <person name="Papagiannakis G."/>
            <person name="Spanos L."/>
            <person name="Cox S."/>
            <person name="Madueno E."/>
            <person name="de Pablos B."/>
            <person name="Modolell J."/>
            <person name="Peter A."/>
            <person name="Schoettler P."/>
            <person name="Werner M."/>
            <person name="Mourkioti F."/>
            <person name="Beinert N."/>
            <person name="Dowe G."/>
            <person name="Schaefer U."/>
            <person name="Jaeckle H."/>
            <person name="Bucheton A."/>
            <person name="Callister D.M."/>
            <person name="Campbell L.A."/>
            <person name="Darlamitsou A."/>
            <person name="Henderson N.S."/>
            <person name="McMillan P.J."/>
            <person name="Salles C."/>
            <person name="Tait E.A."/>
            <person name="Valenti P."/>
            <person name="Saunders R.D.C."/>
            <person name="Glover D.M."/>
        </authorList>
    </citation>
    <scope>NUCLEOTIDE SEQUENCE [LARGE SCALE GENOMIC DNA]</scope>
    <source>
        <strain evidence="3">Oregon-R</strain>
    </source>
</reference>
<reference key="5">
    <citation type="journal article" date="2008" name="Biochem. J.">
        <title>MAP1 structural organization in Drosophila: in vivo analysis of FUTSCH reveals heavy- and light-chain subunits generated by proteolytic processing at a conserved cleavage site.</title>
        <authorList>
            <person name="Zou B."/>
            <person name="Yan H."/>
            <person name="Kawasaki F."/>
            <person name="Ordway R.W."/>
        </authorList>
    </citation>
    <scope>NUCLEOTIDE SEQUENCE [MRNA] OF 5329-5495</scope>
    <scope>SUBUNIT</scope>
    <scope>PROTEOLYTIC CLEAVAGE</scope>
    <source>
        <strain>Canton-S</strain>
    </source>
</reference>
<reference evidence="14" key="6">
    <citation type="journal article" date="2000" name="Neuron">
        <title>Drosophila Futsch regulates synaptic microtubule organization and is necessary for synaptic growth.</title>
        <authorList>
            <person name="Roos J."/>
            <person name="Hummel T."/>
            <person name="Ng N."/>
            <person name="Klambt C."/>
            <person name="Davis G.W."/>
        </authorList>
    </citation>
    <scope>FUNCTION</scope>
    <scope>SUBCELLULAR LOCATION</scope>
    <scope>TISSUE SPECIFICITY</scope>
</reference>
<reference evidence="14" key="7">
    <citation type="journal article" date="2001" name="Cell">
        <title>Drosophila fragile X-related gene regulates the MAP1B homolog Futsch to control synaptic structure and function.</title>
        <authorList>
            <person name="Zhang Y.Q."/>
            <person name="Bailey A.M."/>
            <person name="Matthies H.J.G."/>
            <person name="Renden R.B."/>
            <person name="Smith M.A."/>
            <person name="Speese S.D."/>
            <person name="Rubin G.M."/>
            <person name="Broadie K.S."/>
        </authorList>
    </citation>
    <scope>FUNCTION</scope>
    <scope>INTERACTION WITH FMR1</scope>
</reference>
<reference key="8">
    <citation type="journal article" date="2006" name="Mol. Cell. Neurosci.">
        <title>The Drosophila microtubule associated protein Futsch is phosphorylated by Shaggy/Zeste-white 3 at an homologous GSK3beta phosphorylation site in MAP1B.</title>
        <authorList>
            <person name="Gogel S."/>
            <person name="Wakefield S."/>
            <person name="Tear G."/>
            <person name="Klambt C."/>
            <person name="Gordon-Weeks P.R."/>
        </authorList>
    </citation>
    <scope>PHOSPHORYLATION AT SER-2800 AND SER-4950</scope>
</reference>
<reference key="9">
    <citation type="journal article" date="2007" name="Mol. Biosyst.">
        <title>An integrated chemical, mass spectrometric and computational strategy for (quantitative) phosphoproteomics: application to Drosophila melanogaster Kc167 cells.</title>
        <authorList>
            <person name="Bodenmiller B."/>
            <person name="Mueller L.N."/>
            <person name="Pedrioli P.G.A."/>
            <person name="Pflieger D."/>
            <person name="Juenger M.A."/>
            <person name="Eng J.K."/>
            <person name="Aebersold R."/>
            <person name="Tao W.A."/>
        </authorList>
    </citation>
    <scope>PHOSPHORYLATION [LARGE SCALE ANALYSIS] AT SER-3067; SER-3071 AND SER-3075</scope>
    <scope>IDENTIFICATION BY MASS SPECTROMETRY</scope>
</reference>
<reference key="10">
    <citation type="journal article" date="2010" name="J. Neurosci.">
        <title>LRRK2 kinase regulates synaptic morphology through distinct substrates at the presynaptic and postsynaptic compartments of the Drosophila neuromuscular junction.</title>
        <authorList>
            <person name="Lee S."/>
            <person name="Liu H.P."/>
            <person name="Lin W.Y."/>
            <person name="Guo H."/>
            <person name="Lu B."/>
        </authorList>
    </citation>
    <scope>PHOSPHORYLATION BY LRRK2</scope>
</reference>
<reference key="11">
    <citation type="journal article" date="2019" name="Front. Cell. Neurosci.">
        <title>Tubulin polymerization promoting protein, ringmaker, and MAP1B homolog futsch coordinate microtubule organization and synaptic growth.</title>
        <authorList>
            <person name="Shi Q."/>
            <person name="Lin Y.Q."/>
            <person name="Saliba A."/>
            <person name="Xie J."/>
            <person name="Neely G.G."/>
            <person name="Banerjee S."/>
        </authorList>
    </citation>
    <scope>FUNCTION</scope>
    <scope>SUBUNIT</scope>
    <scope>DISRUPTION PHENOTYPE</scope>
</reference>
<reference key="12">
    <citation type="journal article" date="2020" name="Genes Dev.">
        <title>The microtubule regulator ringer functions downstream from the RNA repair/splicing pathway to promote axon regeneration.</title>
        <authorList>
            <person name="Vargas E.J.M."/>
            <person name="Matamoros A.J."/>
            <person name="Qiu J."/>
            <person name="Jan C.H."/>
            <person name="Wang Q."/>
            <person name="Gorczyca D."/>
            <person name="Han T.W."/>
            <person name="Weissman J.S."/>
            <person name="Jan Y.N."/>
            <person name="Banerjee S."/>
            <person name="Song Y."/>
        </authorList>
    </citation>
    <scope>FUNCTION</scope>
    <scope>DEVELOPMENTAL STAGE</scope>
</reference>
<sequence>MGDQPKATTTATGGAAGPVPEGDAVMATTNQDALAKGAGDGPAQDAAQEPGQAEHGEPGDGGDGGDDGATDAGASSLPPSEIGGRAPLDTACSDADGGAPSSLAGGIVGPPSPLTGCYLLIVLGEPHSEEHKDNILQHLLKGFLSWDVSDCHVDLEEELNTITQHAPEGEEARHGERLIQYASENLVTEVLIHPQYNTLIQCMRNLLSSFTRHRHIIHAGYTFSGNGSWILQDGTFSVADFSEAFQEHDVQRVIRAYADTITMNIHCADAGLWHTLPEKAFARQCRIRINPVDVLDTSSECINGFIDYLAPMVMPTSLRELLETSDVVGNIRFTHPTLYVFPGGQGDAALFGINGFNMLVDGGFNRKACFWDFARHLDRLDAVLMTRLNNSNVQGLGAVVSRKRDAHVYPQIGHFFGNVPDRKGLPSPDGDKDRDPLLIDLFERGHGIVSDLKALDLKPQCCYRNQEPVNLYHKVGHGTLDMYVISPARDSKEVKEFLQKWHAGDQRLFAARDSRDFNFPLQNLVSICALLVWQPANPDDTITRILFPGSTPDFKIQEGLEKLKHLEFMKHSTCTAKSIAPAIQTVTSTRKSLKSAIEATPAPPSASYKTTKFSPVASAALAVQHPQQQDNKAKEAAAAAAAAAAAAASAATIARAKADSMDTDAEPEHEADPEPADTGDEAAPTEQEPEAETEPEPEHEPEAEQDKDVGEEKKVEVLIMKPQQATPAVIAASGKDGVDAASADATPTGKLSKASAKGKADKPRAEVKPVVRSRIDTKPPKSMDRKLAKRDEKKSSPTTTPAARAPVAQNAKPKVLSRPATKSSPSSTPAKSAKEANNRKVLESKQQAARVQATSTVSRRVTSTASERRVQQQAEAKTAATGATQATQRKPISRRPRGVSPSKRAPAPGSPVKQAKPKAADLKKTRLDKGGTTDSSLVSTPSADEATAAKKLQDLTASQELDAEKQRELDDLKEEQEVVREIEAVFSRDEMKRQQHQQIKAELREMPAEGTGDGENEPDEEEEYLIIEKEEVEQYTEDSIVEQESSMTKEEEIQKHQRDSQESEKKRKKSAEEEIEAAIAKVEAAERKARLEGASARQDESELDVEPEQSKIKAEVQDIIATAKDIAKSRTEEQLAKPAEEELSSPTPEEKLSKKTSDTKDDQIGAPVDVLPVNLQESLPEEKFSATIESGATTAPTLPEDERIPLDQIKEDLVIEEKYVKEETKEAEAIVVATVQTLPEAAPLAIDTILASATKDAPKDANAEALGELPDSGERVLPMKMTFEAQQNLLRDVIKTPDEVADLPVHEEADLGLYEKDSQDAGAKSISHKEESAKEEKETDDEKENKVGEIELGDEPNKVDISHVLLKESVQEVAEKVVVIETTVEKKQEEIVEATTVITQENQEDLMEQVKDKEEHEQKIESGIITEKEAKKSASTPEEKETSDITSDDELPAQLADPTTVPPKSAKDREDTGSIESPPTIEEAIEVEVQAKQEAQKPVPAPEEAIKTEKSPLASKETSRPESATGSVKEDTEQTKSKKSPVPSRPESEAKDKKSPFASGEASRPESVAESVKDEAGKAESRRESIAKTHKDESSLDKAKEQESRRESLAESIKPESGIDEKSALASKEASRPESVTDKSKEPSRRESIAESLKAESTKDEKSAPPSKEASRPGSVVESVKDETEKSKEPSRRESIAESAKPPIEFREVSRPESVIDGIKDESAKPESRRDSPLASKEASRPESVLESVKDEPIKSTEKSRRESVAESFKADSTKDEKSPLTSKDISRPESAVENVMDAVGSAERSQPESVTASRDVSRPESVAESEKDDTDKPESVVESVIPASDVVEIEKGAADKEKGVFVSLEIGKPDSPSEVISRPGPVVESVKPESRRESSTEIVLPCHAEDSKEPSRPESKVECLKDESEVLKGSTRRESVAESDKSSQPFKETSRPESAVGSMKDESMSKEPSRRESVKDGAAQSRETSRPASVAESAKDGADDLKELSRPESTTQSKEAGSIKDEKSPLASEEASRPASVAESVKDEAEKSKEESRRESVAEKSPLPSKEASRPASVAESIKDEAEKSKEESRRESVAEKSPLPSKEASRPASVAESIKDEAEKSKEESRRESVAEKSPLPSKEASRPASVAESIKDEAEKSKEESRRESVAEKSPLPSKEASRPASVAESIKDEAEKSKEESRRESVAEKSPLPSKEASRPASVAESIKDEAEKSKEESRRESVAEKSPLPSKEASRPASVAESIKDEAEKSKEESRRESVAEKSPLPSKEASRPASVAESIKDEAEKSKEETRRESVAEKSPLPSKEASRPASVAESIKDEAEKSKEESRRESAAEKSPLPSKEASRPASVAESVKDEADKSKEESRRESMAESGKAQSIKGDQSPLKEVSRPESVAESVKDDPVKSKEPSRRESVAGSVTADSARDDQSPLESKGASRPESVVDSVKDEAEKQESRRESKTESVIPPKAKDDKSPKEVLQPVSMTETIREDADQPMKPSQAESRRESIAESIKASSPRDEKSPLASKEASRPGSVAESIKYDLDKPQIIKDDKSTEHSRRESLEDKSAVTSEKSVSRPLSVASDHEAAVAIEDDAKSSISPKDKSRPGFVAETVSSPIEEATMEFSKIEVVEKSSLALSLQGGSGGKLQTDSSPVDVAEGDFSHAVASVSTVTPTLTKPAELAQIGAAKTVSSPLDEALRTPSAPEHISRADSPAECASEEIASQDKSPQVLKESSRPAWVAESKDDAAQLKSSVEDLRSPVASTEISRPASAGETASSPIEEAPKDFAEFEQAEKAVLPLTIELKGNLPTLSSPVDVAHGDFPQTSTPTSSPTVASVQPAELSKVDIEKTASSPIDEAPKSLIGCPAEERPESPAESAKDAAESVEKSKDASRPPSVVESTKADSTKGDISPSPESVLEGPKDDVEKSKESSRPPSVSASITGDSTKDVSRPASVVESVKDEHDKAESRRESIAKVESVIDEAGKSDSKSSSQDSQKDEKSTLASKEASRRESVVESSKDDAEKSESRPESVIASGEPVPRESKSPLDSKDTSRPGSMVESVTAEDEKSEQQSRRESVAESVKADTKKDGKSQEASRPSSVDELLKDDDEKQESRRQSITGSHKAMSTMGDESPMDKADKSKEPSRPESVAESIKHENTKDEESPLGSRRDSVAESIKSDITKGEKSPLPSKEVSRPESVVGSIKDEKAESRRESVAESVKPESSKDATSAPPSKEHSRPESVLGSLKDEGDKTTSRRVSVADSIKDEKSLLVSQEASRPESEAESLKDAAAPSQETSRPESVTESVKDGKSPVASKEASRPASVAENAKDSADESKEQRPESLPQSKAGSIKDEKSPLASKDEAEKSKEESRRESVAEQFPLVSKEVSRPASVAESVKDEAEKSKEESPLMSKEASRPASVAGSVKDEAEKSKEESRRESVAEKSPLPSKEASRPASVAESVKDEADKSKEESRRESGAEKSPLASKEASRPASVAESIKDEAEKSKEESRRESVAEKSPLPSKEASRPTSVAESVKDEAEKSKEESRRDSVAEKSPLASKEASRPASVAESVQDEAEKSKEESRRESVAEKSPLASKEASRPASVAESIKDEAEKSKEESRRESVAEKSPLASKEASRPTSVAESVKDEAEKSKEESSRDSVAEKSPLASKEASRPASVAESVQDEAEKSKEESRRESVAEKSPLASKEASRPASVAESVKDDAEKSKEESRRESVAEKSPLASKEASRPASVAESVKDEAEKSKEESRRESVAEKSPLPSKEASRPTSVAESVKDEAEKSKEESRRESVAEKSSLASKKASRPASVAESVKDEAEKSKEESRRESVAEKSPLASKEASRPASVAESVKDEAEKSKEESRRESVAEKSPLPSKEASRPTSVAESVKDEADKSKEESRRESGAEKSPLASMEASRPTSVAESVKDETEKSKEESRRESVTEKSPLPSKEASRPTSVAESVKDEAEKSKEESRRESVAEKSPLASKESSRPASVAESIKDEAEGTKQESRRESMPESGKAESIKGDQSSLASKETSRPDSVVESVKDETEKPEGSAIDKSQVASRPESVAVSAKDEKSPLHSRPESVADKSPDASKEASRSLSVAETASSPIEEGPRSIADLSLPLNLTGEAKGKLPTLSSPIDVAEGDFLEVKAESSPRPAVLSKPAEFSQPDTGHTASTPVDEASPVLEEIEVVEQHTTSGVGATGATAETDLLDLTETKSETVTKQSETTLFETLTSKVESKVEVLESSVKQVEEKVQTSVKQAETTVTDSLEQLTKKSSEQLTEIKSVLDTNFEEVAKIVADVAKVLKSDKDITDIIPDFDERQLEEKLKSTADTEEESDKSTRDEKSLEISVKVEIESEKSSPDQKSGPISIEEKDKIEQSEKAQLRQGILTSSRPESVASQPESVPSPSQSAASHEHKEVELSESHKAEKSSRPESVASQVSEKDMKTSRPASSTSQFSTKEGDEETTESLLHSLTTTETVETKQMEEKSSFESVSTSVTKSTVLSSQSTVQLREESTSESLSSSLKVEDSSRRESLSSLLAEKGGIATNTSLKEDTSASASQLEELLVQSEECSSESIVSEIQTSIAQKSNKEIKDARETKVTSQFTTTTSSATKDDSLKETVAEFLATEKIVSAKEAFSTEATKSADDCLKKTTASAVSSTSASQRALFVGTDESRRESLLSQASESRLTHSDPEDEEPADDVDERSSVKESRSKSIATIMMTSIYKPSEDMEPISKLVEEEHEHVEELAQEVTSTSKTTTLLQSSEQSSTTTSSTSKTGASRVESITLTQMDQQTSQSQGDPADRKTPPTAPVSPGVKAMSSTGSAGSVIGAGAGAVAAGGKCESSAASIVSSSGPMSPKDISGKSSPGALTSESQSIPTPLGRESHTDTPESSPKPTSPFPRVSKDELKSLEMQHHSQEQMLAGAAAAAGAECEGDIPELHELRGLECTTALSGSTDKIITTTITTVTKVISADGKEIVTEQKTVTTTDSSEPDSEKVVVTTTRTTSESERDQLLPKEVALLRGLYRASTPGSEDDEDLLLGSPRSATSYELQHSSSGVSKRSDLDADGDESQDDIPPQYGSEEHSTARSILLPRTADPMATSFYGALPDSFDVVMKPSTEPIPIQGAPSGDSQSSESVESSSQTWAGHKFLDQADKDFQRALEEHVQARGAEVMSSVTAKYSYSPSKAEEMEQIVSGTAERQRFPLSDVQRARVAESGFATVGSVASQQQQQEKGGEVEQAVPTTTAVTASTTATASSTGALPKDRLEEWGKPLGLPSPAPLPVEGGADIRTTPKKERRLVATKTRLNNEKNLRRRSESPNKAGKKPAPVYVDLTYVPHNGNSYYAHVDFFKRVRARYYVFSGTEPSRQVYDALLEAKQTWEDKELEVTIIPTYDTDVLGYWVAENEELLAKHRIDLSPSASRCTINLQDHETSCSAYRLEF</sequence>
<gene>
    <name type="primary">futsch</name>
    <name type="ORF">CG34387</name>
</gene>
<evidence type="ECO:0000256" key="1">
    <source>
        <dbReference type="SAM" id="MobiDB-lite"/>
    </source>
</evidence>
<evidence type="ECO:0000269" key="2">
    <source>
    </source>
</evidence>
<evidence type="ECO:0000269" key="3">
    <source>
    </source>
</evidence>
<evidence type="ECO:0000269" key="4">
    <source>
    </source>
</evidence>
<evidence type="ECO:0000269" key="5">
    <source>
    </source>
</evidence>
<evidence type="ECO:0000269" key="6">
    <source>
    </source>
</evidence>
<evidence type="ECO:0000269" key="7">
    <source>
    </source>
</evidence>
<evidence type="ECO:0000269" key="8">
    <source>
    </source>
</evidence>
<evidence type="ECO:0000269" key="9">
    <source>
    </source>
</evidence>
<evidence type="ECO:0000269" key="10">
    <source>
    </source>
</evidence>
<evidence type="ECO:0000269" key="11">
    <source>
    </source>
</evidence>
<evidence type="ECO:0000269" key="12">
    <source>
    </source>
</evidence>
<evidence type="ECO:0000303" key="13">
    <source>
    </source>
</evidence>
<evidence type="ECO:0000305" key="14"/>
<evidence type="ECO:0000305" key="15">
    <source>
    </source>
</evidence>
<evidence type="ECO:0000312" key="16">
    <source>
        <dbReference type="EMBL" id="CAA20006.1"/>
    </source>
</evidence>
<accession>Q9W596</accession>
<accession>A8JTS2</accession>
<accession>B2YGG3</accession>
<accession>O76891</accession>
<organism>
    <name type="scientific">Drosophila melanogaster</name>
    <name type="common">Fruit fly</name>
    <dbReference type="NCBI Taxonomy" id="7227"/>
    <lineage>
        <taxon>Eukaryota</taxon>
        <taxon>Metazoa</taxon>
        <taxon>Ecdysozoa</taxon>
        <taxon>Arthropoda</taxon>
        <taxon>Hexapoda</taxon>
        <taxon>Insecta</taxon>
        <taxon>Pterygota</taxon>
        <taxon>Neoptera</taxon>
        <taxon>Endopterygota</taxon>
        <taxon>Diptera</taxon>
        <taxon>Brachycera</taxon>
        <taxon>Muscomorpha</taxon>
        <taxon>Ephydroidea</taxon>
        <taxon>Drosophilidae</taxon>
        <taxon>Drosophila</taxon>
        <taxon>Sophophora</taxon>
    </lineage>
</organism>